<reference key="1">
    <citation type="journal article" date="2007" name="J. Pept. Sci.">
        <title>Diversity of the O-superfamily conotoxins from Conus miles.</title>
        <authorList>
            <person name="Luo S."/>
            <person name="Zhangsun D."/>
            <person name="Feng J."/>
            <person name="Wu Y."/>
            <person name="Zhu X."/>
            <person name="Hu Y."/>
        </authorList>
    </citation>
    <scope>NUCLEOTIDE SEQUENCE [MRNA]</scope>
    <source>
        <tissue>Venom duct</tissue>
    </source>
</reference>
<accession>Q3YEG4</accession>
<protein>
    <recommendedName>
        <fullName evidence="3">Conotoxin MiK41</fullName>
    </recommendedName>
</protein>
<evidence type="ECO:0000250" key="1"/>
<evidence type="ECO:0000255" key="2"/>
<evidence type="ECO:0000303" key="3">
    <source>
    </source>
</evidence>
<evidence type="ECO:0000305" key="4"/>
<evidence type="ECO:0000305" key="5">
    <source>
    </source>
</evidence>
<dbReference type="EMBL" id="DQ141149">
    <property type="protein sequence ID" value="AAZ83750.4"/>
    <property type="molecule type" value="mRNA"/>
</dbReference>
<dbReference type="SMR" id="Q3YEG4"/>
<dbReference type="ConoServer" id="1182">
    <property type="toxin name" value="MiK41 precursor"/>
</dbReference>
<dbReference type="GO" id="GO:0005576">
    <property type="term" value="C:extracellular region"/>
    <property type="evidence" value="ECO:0007669"/>
    <property type="project" value="UniProtKB-SubCell"/>
</dbReference>
<dbReference type="GO" id="GO:0008200">
    <property type="term" value="F:ion channel inhibitor activity"/>
    <property type="evidence" value="ECO:0007669"/>
    <property type="project" value="InterPro"/>
</dbReference>
<dbReference type="GO" id="GO:0090729">
    <property type="term" value="F:toxin activity"/>
    <property type="evidence" value="ECO:0007669"/>
    <property type="project" value="UniProtKB-KW"/>
</dbReference>
<dbReference type="InterPro" id="IPR004214">
    <property type="entry name" value="Conotoxin"/>
</dbReference>
<dbReference type="Pfam" id="PF02950">
    <property type="entry name" value="Conotoxin"/>
    <property type="match status" value="1"/>
</dbReference>
<keyword id="KW-0165">Cleavage on pair of basic residues</keyword>
<keyword id="KW-1015">Disulfide bond</keyword>
<keyword id="KW-0960">Knottin</keyword>
<keyword id="KW-0528">Neurotoxin</keyword>
<keyword id="KW-0964">Secreted</keyword>
<keyword id="KW-0732">Signal</keyword>
<keyword id="KW-0800">Toxin</keyword>
<name>O1641_CONMI</name>
<comment type="subcellular location">
    <subcellularLocation>
        <location evidence="5">Secreted</location>
    </subcellularLocation>
</comment>
<comment type="tissue specificity">
    <text evidence="5">Expressed by the venom duct.</text>
</comment>
<comment type="domain">
    <text evidence="4">The presence of a 'disulfide through disulfide knot' structurally defines this protein as a knottin.</text>
</comment>
<comment type="domain">
    <text evidence="4">The cysteine framework is VI/VII (C-C-CC-C-C).</text>
</comment>
<comment type="similarity">
    <text evidence="4">Belongs to the conotoxin O1 superfamily.</text>
</comment>
<organism>
    <name type="scientific">Conus miles</name>
    <name type="common">Soldier cone</name>
    <name type="synonym">Mile cone</name>
    <dbReference type="NCBI Taxonomy" id="69564"/>
    <lineage>
        <taxon>Eukaryota</taxon>
        <taxon>Metazoa</taxon>
        <taxon>Spiralia</taxon>
        <taxon>Lophotrochozoa</taxon>
        <taxon>Mollusca</taxon>
        <taxon>Gastropoda</taxon>
        <taxon>Caenogastropoda</taxon>
        <taxon>Neogastropoda</taxon>
        <taxon>Conoidea</taxon>
        <taxon>Conidae</taxon>
        <taxon>Conus</taxon>
        <taxon>Rhizoconus</taxon>
    </lineage>
</organism>
<proteinExistence type="inferred from homology"/>
<feature type="signal peptide" evidence="2">
    <location>
        <begin position="1"/>
        <end position="22"/>
    </location>
</feature>
<feature type="propeptide" id="PRO_0000273429" evidence="1">
    <location>
        <begin position="23"/>
        <end position="45"/>
    </location>
</feature>
<feature type="peptide" id="PRO_0000273430" description="Conotoxin MiK41">
    <location>
        <begin position="47"/>
        <end position="74"/>
    </location>
</feature>
<feature type="disulfide bond" evidence="1">
    <location>
        <begin position="48"/>
        <end position="62"/>
    </location>
</feature>
<feature type="disulfide bond" evidence="1">
    <location>
        <begin position="55"/>
        <end position="66"/>
    </location>
</feature>
<feature type="disulfide bond" evidence="1">
    <location>
        <begin position="61"/>
        <end position="73"/>
    </location>
</feature>
<sequence>MKLTCVLIITVLFLTACQLTTAVTYSRGEHKHRALMSTGTNYRLPKTCRSSGRYCRSPYDCCRRYCRRITDACV</sequence>